<protein>
    <recommendedName>
        <fullName evidence="1">Iron-sulfur cluster repair protein ScdA</fullName>
    </recommendedName>
</protein>
<proteinExistence type="inferred from homology"/>
<sequence length="224" mass="25485">MINKNDIVADVVTDYPKAADIFRSVGIDFCCGGQVSIEAAALEKKNVDLNELLQRLNDVEQTNTPGSLNPKFLNVSSLIQYIQSAYHEPLREEFKNLTPYVTKLSKVHGPNHPYLVELKETYDTFKNGMLEHMQKEDDVDFPKLIKYEQGEVVDDINTVIDDLVSDHIATGELLVKMSELTSSYEPPIEACGTWRLVYQRLKALEVLTHEHVHLENHVLFKKVS</sequence>
<name>SCDA_STAAE</name>
<comment type="function">
    <text evidence="1">Di-iron-containing protein involved in the repair of iron-sulfur clusters damaged by oxidative and nitrosative stress conditions.</text>
</comment>
<comment type="subunit">
    <text evidence="1">Homodimer.</text>
</comment>
<comment type="subcellular location">
    <subcellularLocation>
        <location evidence="1">Cytoplasm</location>
    </subcellularLocation>
</comment>
<comment type="similarity">
    <text evidence="1">Belongs to the RIC family. ScdA subfamily.</text>
</comment>
<feature type="chain" id="PRO_1000073072" description="Iron-sulfur cluster repair protein ScdA">
    <location>
        <begin position="1"/>
        <end position="224"/>
    </location>
</feature>
<evidence type="ECO:0000255" key="1">
    <source>
        <dbReference type="HAMAP-Rule" id="MF_01156"/>
    </source>
</evidence>
<reference key="1">
    <citation type="journal article" date="2008" name="J. Bacteriol.">
        <title>Genome sequence of Staphylococcus aureus strain Newman and comparative analysis of staphylococcal genomes: polymorphism and evolution of two major pathogenicity islands.</title>
        <authorList>
            <person name="Baba T."/>
            <person name="Bae T."/>
            <person name="Schneewind O."/>
            <person name="Takeuchi F."/>
            <person name="Hiramatsu K."/>
        </authorList>
    </citation>
    <scope>NUCLEOTIDE SEQUENCE [LARGE SCALE GENOMIC DNA]</scope>
    <source>
        <strain>Newman</strain>
    </source>
</reference>
<accession>A6QDN3</accession>
<dbReference type="EMBL" id="AP009351">
    <property type="protein sequence ID" value="BAF66465.1"/>
    <property type="molecule type" value="Genomic_DNA"/>
</dbReference>
<dbReference type="RefSeq" id="WP_000608826.1">
    <property type="nucleotide sequence ID" value="NZ_JBBIAE010000003.1"/>
</dbReference>
<dbReference type="SMR" id="A6QDN3"/>
<dbReference type="KEGG" id="sae:NWMN_0193"/>
<dbReference type="HOGENOM" id="CLU_076075_0_1_9"/>
<dbReference type="Proteomes" id="UP000006386">
    <property type="component" value="Chromosome"/>
</dbReference>
<dbReference type="GO" id="GO:0005737">
    <property type="term" value="C:cytoplasm"/>
    <property type="evidence" value="ECO:0007669"/>
    <property type="project" value="UniProtKB-SubCell"/>
</dbReference>
<dbReference type="GO" id="GO:0046872">
    <property type="term" value="F:metal ion binding"/>
    <property type="evidence" value="ECO:0007669"/>
    <property type="project" value="UniProtKB-KW"/>
</dbReference>
<dbReference type="GO" id="GO:0030091">
    <property type="term" value="P:protein repair"/>
    <property type="evidence" value="ECO:0007669"/>
    <property type="project" value="UniProtKB-UniRule"/>
</dbReference>
<dbReference type="GO" id="GO:0051409">
    <property type="term" value="P:response to nitrosative stress"/>
    <property type="evidence" value="ECO:0007669"/>
    <property type="project" value="UniProtKB-UniRule"/>
</dbReference>
<dbReference type="GO" id="GO:0006979">
    <property type="term" value="P:response to oxidative stress"/>
    <property type="evidence" value="ECO:0007669"/>
    <property type="project" value="UniProtKB-UniRule"/>
</dbReference>
<dbReference type="FunFam" id="1.20.120.520:FF:000003">
    <property type="entry name" value="Iron-sulfur cluster repair protein ScdA"/>
    <property type="match status" value="1"/>
</dbReference>
<dbReference type="Gene3D" id="1.20.120.520">
    <property type="entry name" value="nmb1532 protein domain like"/>
    <property type="match status" value="1"/>
</dbReference>
<dbReference type="Gene3D" id="1.10.3910.10">
    <property type="entry name" value="SP0561-like"/>
    <property type="match status" value="1"/>
</dbReference>
<dbReference type="HAMAP" id="MF_01156">
    <property type="entry name" value="RIC_ScdA"/>
    <property type="match status" value="1"/>
</dbReference>
<dbReference type="InterPro" id="IPR012312">
    <property type="entry name" value="Hemerythrin-like"/>
</dbReference>
<dbReference type="InterPro" id="IPR019903">
    <property type="entry name" value="RIC_family"/>
</dbReference>
<dbReference type="InterPro" id="IPR023551">
    <property type="entry name" value="ScdA"/>
</dbReference>
<dbReference type="InterPro" id="IPR038062">
    <property type="entry name" value="ScdA-like_N_sf"/>
</dbReference>
<dbReference type="NCBIfam" id="TIGR03652">
    <property type="entry name" value="FeS_repair_RIC"/>
    <property type="match status" value="1"/>
</dbReference>
<dbReference type="NCBIfam" id="NF009777">
    <property type="entry name" value="PRK13276.1"/>
    <property type="match status" value="1"/>
</dbReference>
<dbReference type="PANTHER" id="PTHR36438">
    <property type="entry name" value="IRON-SULFUR CLUSTER REPAIR PROTEIN YTFE"/>
    <property type="match status" value="1"/>
</dbReference>
<dbReference type="PANTHER" id="PTHR36438:SF1">
    <property type="entry name" value="IRON-SULFUR CLUSTER REPAIR PROTEIN YTFE"/>
    <property type="match status" value="1"/>
</dbReference>
<dbReference type="Pfam" id="PF01814">
    <property type="entry name" value="Hemerythrin"/>
    <property type="match status" value="1"/>
</dbReference>
<dbReference type="Pfam" id="PF04405">
    <property type="entry name" value="ScdA_N"/>
    <property type="match status" value="1"/>
</dbReference>
<dbReference type="SUPFAM" id="SSF140683">
    <property type="entry name" value="SP0561-like"/>
    <property type="match status" value="1"/>
</dbReference>
<keyword id="KW-0963">Cytoplasm</keyword>
<keyword id="KW-0408">Iron</keyword>
<keyword id="KW-0479">Metal-binding</keyword>
<keyword id="KW-0346">Stress response</keyword>
<organism>
    <name type="scientific">Staphylococcus aureus (strain Newman)</name>
    <dbReference type="NCBI Taxonomy" id="426430"/>
    <lineage>
        <taxon>Bacteria</taxon>
        <taxon>Bacillati</taxon>
        <taxon>Bacillota</taxon>
        <taxon>Bacilli</taxon>
        <taxon>Bacillales</taxon>
        <taxon>Staphylococcaceae</taxon>
        <taxon>Staphylococcus</taxon>
    </lineage>
</organism>
<gene>
    <name evidence="1" type="primary">scdA</name>
    <name type="ordered locus">NWMN_0193</name>
</gene>